<sequence length="361" mass="40450">MDSLTLFFTGALVAVGIYWFLCVLGPAERKGKRAVDLSGGSISAEKVQDNYKQYWSFFRRPKEIETAEKVPDFVDTFYNLVTDIYEWGWGQSFHFSPSIPGKSHKDATRLHEEMAVDLIQVKPGQKILDVGCGVGGPMRAIASHSRANVVGITINEYQVNRARLHNKKAGLDALCEVVCGNFLQMPFDDNSFDGAYSIEATCHAPKLEEVYAEIYRVLKPGSMYVSYEWVTTEKFKAEDDEHVEVIQGIERGDALPGLRAYVDIAETAKKVGFEIVKEKDLASPPAEPWWTRLKMGRLAYWRNHIVVQILSAVGVAPKGTVDVHEMLFKTADYLTRGGETGIFSPMHMILCRKPESPEESS</sequence>
<keyword id="KW-0444">Lipid biosynthesis</keyword>
<keyword id="KW-0443">Lipid metabolism</keyword>
<keyword id="KW-0489">Methyltransferase</keyword>
<keyword id="KW-1185">Reference proteome</keyword>
<keyword id="KW-0949">S-adenosyl-L-methionine</keyword>
<keyword id="KW-0752">Steroid biosynthesis</keyword>
<keyword id="KW-0753">Steroid metabolism</keyword>
<keyword id="KW-0756">Sterol biosynthesis</keyword>
<keyword id="KW-1207">Sterol metabolism</keyword>
<keyword id="KW-0808">Transferase</keyword>
<protein>
    <recommendedName>
        <fullName>24-methylenesterol C-methyltransferase 2</fullName>
        <shortName>24-sterol C-methyltransferase 2</shortName>
        <shortName>Sterol-C-methyltransferase 2</shortName>
        <ecNumber>2.1.1.143</ecNumber>
    </recommendedName>
    <alternativeName>
        <fullName>Protein COTYLEDON VASCULAR PATTERN 1</fullName>
    </alternativeName>
</protein>
<reference key="1">
    <citation type="journal article" date="1996" name="FEBS Lett.">
        <title>Transformation of Saccharomyces cerevisiae with a cDNA encoding a sterol-C-methyltransferase from Arabidopsis thaliana results in the synthesis of 24-ethyl sterols.</title>
        <authorList>
            <person name="Husselstein T."/>
            <person name="Gachotte D."/>
            <person name="Desprez T."/>
            <person name="Bard M."/>
            <person name="Benveniste P."/>
        </authorList>
    </citation>
    <scope>NUCLEOTIDE SEQUENCE [MRNA]</scope>
    <source>
        <strain>cv. Columbia</strain>
        <tissue>Silique</tissue>
    </source>
</reference>
<reference key="2">
    <citation type="journal article" date="2000" name="Nature">
        <title>Sequence and analysis of chromosome 1 of the plant Arabidopsis thaliana.</title>
        <authorList>
            <person name="Theologis A."/>
            <person name="Ecker J.R."/>
            <person name="Palm C.J."/>
            <person name="Federspiel N.A."/>
            <person name="Kaul S."/>
            <person name="White O."/>
            <person name="Alonso J."/>
            <person name="Altafi H."/>
            <person name="Araujo R."/>
            <person name="Bowman C.L."/>
            <person name="Brooks S.Y."/>
            <person name="Buehler E."/>
            <person name="Chan A."/>
            <person name="Chao Q."/>
            <person name="Chen H."/>
            <person name="Cheuk R.F."/>
            <person name="Chin C.W."/>
            <person name="Chung M.K."/>
            <person name="Conn L."/>
            <person name="Conway A.B."/>
            <person name="Conway A.R."/>
            <person name="Creasy T.H."/>
            <person name="Dewar K."/>
            <person name="Dunn P."/>
            <person name="Etgu P."/>
            <person name="Feldblyum T.V."/>
            <person name="Feng J.-D."/>
            <person name="Fong B."/>
            <person name="Fujii C.Y."/>
            <person name="Gill J.E."/>
            <person name="Goldsmith A.D."/>
            <person name="Haas B."/>
            <person name="Hansen N.F."/>
            <person name="Hughes B."/>
            <person name="Huizar L."/>
            <person name="Hunter J.L."/>
            <person name="Jenkins J."/>
            <person name="Johnson-Hopson C."/>
            <person name="Khan S."/>
            <person name="Khaykin E."/>
            <person name="Kim C.J."/>
            <person name="Koo H.L."/>
            <person name="Kremenetskaia I."/>
            <person name="Kurtz D.B."/>
            <person name="Kwan A."/>
            <person name="Lam B."/>
            <person name="Langin-Hooper S."/>
            <person name="Lee A."/>
            <person name="Lee J.M."/>
            <person name="Lenz C.A."/>
            <person name="Li J.H."/>
            <person name="Li Y.-P."/>
            <person name="Lin X."/>
            <person name="Liu S.X."/>
            <person name="Liu Z.A."/>
            <person name="Luros J.S."/>
            <person name="Maiti R."/>
            <person name="Marziali A."/>
            <person name="Militscher J."/>
            <person name="Miranda M."/>
            <person name="Nguyen M."/>
            <person name="Nierman W.C."/>
            <person name="Osborne B.I."/>
            <person name="Pai G."/>
            <person name="Peterson J."/>
            <person name="Pham P.K."/>
            <person name="Rizzo M."/>
            <person name="Rooney T."/>
            <person name="Rowley D."/>
            <person name="Sakano H."/>
            <person name="Salzberg S.L."/>
            <person name="Schwartz J.R."/>
            <person name="Shinn P."/>
            <person name="Southwick A.M."/>
            <person name="Sun H."/>
            <person name="Tallon L.J."/>
            <person name="Tambunga G."/>
            <person name="Toriumi M.J."/>
            <person name="Town C.D."/>
            <person name="Utterback T."/>
            <person name="Van Aken S."/>
            <person name="Vaysberg M."/>
            <person name="Vysotskaia V.S."/>
            <person name="Walker M."/>
            <person name="Wu D."/>
            <person name="Yu G."/>
            <person name="Fraser C.M."/>
            <person name="Venter J.C."/>
            <person name="Davis R.W."/>
        </authorList>
    </citation>
    <scope>NUCLEOTIDE SEQUENCE [LARGE SCALE GENOMIC DNA]</scope>
    <source>
        <strain>cv. Columbia</strain>
    </source>
</reference>
<reference key="3">
    <citation type="journal article" date="2017" name="Plant J.">
        <title>Araport11: a complete reannotation of the Arabidopsis thaliana reference genome.</title>
        <authorList>
            <person name="Cheng C.Y."/>
            <person name="Krishnakumar V."/>
            <person name="Chan A.P."/>
            <person name="Thibaud-Nissen F."/>
            <person name="Schobel S."/>
            <person name="Town C.D."/>
        </authorList>
    </citation>
    <scope>GENOME REANNOTATION</scope>
    <source>
        <strain>cv. Columbia</strain>
    </source>
</reference>
<reference key="4">
    <citation type="journal article" date="2003" name="Science">
        <title>Empirical analysis of transcriptional activity in the Arabidopsis genome.</title>
        <authorList>
            <person name="Yamada K."/>
            <person name="Lim J."/>
            <person name="Dale J.M."/>
            <person name="Chen H."/>
            <person name="Shinn P."/>
            <person name="Palm C.J."/>
            <person name="Southwick A.M."/>
            <person name="Wu H.C."/>
            <person name="Kim C.J."/>
            <person name="Nguyen M."/>
            <person name="Pham P.K."/>
            <person name="Cheuk R.F."/>
            <person name="Karlin-Newmann G."/>
            <person name="Liu S.X."/>
            <person name="Lam B."/>
            <person name="Sakano H."/>
            <person name="Wu T."/>
            <person name="Yu G."/>
            <person name="Miranda M."/>
            <person name="Quach H.L."/>
            <person name="Tripp M."/>
            <person name="Chang C.H."/>
            <person name="Lee J.M."/>
            <person name="Toriumi M.J."/>
            <person name="Chan M.M."/>
            <person name="Tang C.C."/>
            <person name="Onodera C.S."/>
            <person name="Deng J.M."/>
            <person name="Akiyama K."/>
            <person name="Ansari Y."/>
            <person name="Arakawa T."/>
            <person name="Banh J."/>
            <person name="Banno F."/>
            <person name="Bowser L."/>
            <person name="Brooks S.Y."/>
            <person name="Carninci P."/>
            <person name="Chao Q."/>
            <person name="Choy N."/>
            <person name="Enju A."/>
            <person name="Goldsmith A.D."/>
            <person name="Gurjal M."/>
            <person name="Hansen N.F."/>
            <person name="Hayashizaki Y."/>
            <person name="Johnson-Hopson C."/>
            <person name="Hsuan V.W."/>
            <person name="Iida K."/>
            <person name="Karnes M."/>
            <person name="Khan S."/>
            <person name="Koesema E."/>
            <person name="Ishida J."/>
            <person name="Jiang P.X."/>
            <person name="Jones T."/>
            <person name="Kawai J."/>
            <person name="Kamiya A."/>
            <person name="Meyers C."/>
            <person name="Nakajima M."/>
            <person name="Narusaka M."/>
            <person name="Seki M."/>
            <person name="Sakurai T."/>
            <person name="Satou M."/>
            <person name="Tamse R."/>
            <person name="Vaysberg M."/>
            <person name="Wallender E.K."/>
            <person name="Wong C."/>
            <person name="Yamamura Y."/>
            <person name="Yuan S."/>
            <person name="Shinozaki K."/>
            <person name="Davis R.W."/>
            <person name="Theologis A."/>
            <person name="Ecker J.R."/>
        </authorList>
    </citation>
    <scope>NUCLEOTIDE SEQUENCE [LARGE SCALE MRNA]</scope>
    <source>
        <strain>cv. Columbia</strain>
    </source>
</reference>
<reference key="5">
    <citation type="submission" date="2002-03" db="EMBL/GenBank/DDBJ databases">
        <title>Full-length cDNA from Arabidopsis thaliana.</title>
        <authorList>
            <person name="Brover V.V."/>
            <person name="Troukhan M.E."/>
            <person name="Alexandrov N.A."/>
            <person name="Lu Y.-P."/>
            <person name="Flavell R.B."/>
            <person name="Feldmann K.A."/>
        </authorList>
    </citation>
    <scope>NUCLEOTIDE SEQUENCE [LARGE SCALE MRNA]</scope>
</reference>
<reference key="6">
    <citation type="journal article" date="2002" name="Plant Cell">
        <title>The identification of CVP1 reveals a role for sterols in vascular patterning.</title>
        <authorList>
            <person name="Carland F.M."/>
            <person name="Fujioka S."/>
            <person name="Takatsuto S."/>
            <person name="Yoshida S."/>
            <person name="Nelson T."/>
        </authorList>
    </citation>
    <scope>CHARACTERIZATION</scope>
    <source>
        <strain>cv. Columbia</strain>
    </source>
</reference>
<name>SMT2_ARATH</name>
<proteinExistence type="evidence at protein level"/>
<comment type="function">
    <text>Catalyzes the methyl transfer from S-adenosyl-methionine to the methylene group of 24-methylene lophenol to form 24-ethylidene lophenol.</text>
</comment>
<comment type="catalytic activity">
    <reaction>
        <text>24-methylidenelophenol + S-adenosyl-L-methionine = (Z)-24-ethylidenelophenol + S-adenosyl-L-homocysteine + H(+)</text>
        <dbReference type="Rhea" id="RHEA:21044"/>
        <dbReference type="ChEBI" id="CHEBI:15378"/>
        <dbReference type="ChEBI" id="CHEBI:29107"/>
        <dbReference type="ChEBI" id="CHEBI:33203"/>
        <dbReference type="ChEBI" id="CHEBI:57856"/>
        <dbReference type="ChEBI" id="CHEBI:59789"/>
        <dbReference type="EC" id="2.1.1.143"/>
    </reaction>
</comment>
<comment type="pathway">
    <text>Steroid biosynthesis; sterol biosynthesis.</text>
</comment>
<comment type="similarity">
    <text evidence="1">Belongs to the class I-like SAM-binding methyltransferase superfamily. Erg6/SMT family.</text>
</comment>
<organism>
    <name type="scientific">Arabidopsis thaliana</name>
    <name type="common">Mouse-ear cress</name>
    <dbReference type="NCBI Taxonomy" id="3702"/>
    <lineage>
        <taxon>Eukaryota</taxon>
        <taxon>Viridiplantae</taxon>
        <taxon>Streptophyta</taxon>
        <taxon>Embryophyta</taxon>
        <taxon>Tracheophyta</taxon>
        <taxon>Spermatophyta</taxon>
        <taxon>Magnoliopsida</taxon>
        <taxon>eudicotyledons</taxon>
        <taxon>Gunneridae</taxon>
        <taxon>Pentapetalae</taxon>
        <taxon>rosids</taxon>
        <taxon>malvids</taxon>
        <taxon>Brassicales</taxon>
        <taxon>Brassicaceae</taxon>
        <taxon>Camelineae</taxon>
        <taxon>Arabidopsis</taxon>
    </lineage>
</organism>
<evidence type="ECO:0000255" key="1">
    <source>
        <dbReference type="PROSITE-ProRule" id="PRU01022"/>
    </source>
</evidence>
<evidence type="ECO:0000305" key="2"/>
<dbReference type="EC" id="2.1.1.143"/>
<dbReference type="EMBL" id="X89867">
    <property type="protein sequence ID" value="CAA61966.1"/>
    <property type="molecule type" value="mRNA"/>
</dbReference>
<dbReference type="EMBL" id="AC026234">
    <property type="protein sequence ID" value="AAF88156.1"/>
    <property type="molecule type" value="Genomic_DNA"/>
</dbReference>
<dbReference type="EMBL" id="CP002684">
    <property type="protein sequence ID" value="AEE29962.1"/>
    <property type="molecule type" value="Genomic_DNA"/>
</dbReference>
<dbReference type="EMBL" id="AY046042">
    <property type="protein sequence ID" value="AAK76716.1"/>
    <property type="molecule type" value="mRNA"/>
</dbReference>
<dbReference type="EMBL" id="AF332417">
    <property type="protein sequence ID" value="AAG48780.1"/>
    <property type="molecule type" value="mRNA"/>
</dbReference>
<dbReference type="EMBL" id="AY113961">
    <property type="protein sequence ID" value="AAM45009.1"/>
    <property type="molecule type" value="mRNA"/>
</dbReference>
<dbReference type="EMBL" id="AY128389">
    <property type="protein sequence ID" value="AAM91592.1"/>
    <property type="molecule type" value="mRNA"/>
</dbReference>
<dbReference type="EMBL" id="BT002093">
    <property type="protein sequence ID" value="AAN72104.1"/>
    <property type="molecule type" value="mRNA"/>
</dbReference>
<dbReference type="EMBL" id="BT000750">
    <property type="protein sequence ID" value="AAN31890.1"/>
    <property type="molecule type" value="mRNA"/>
</dbReference>
<dbReference type="EMBL" id="AY086699">
    <property type="protein sequence ID" value="AAM63753.1"/>
    <property type="molecule type" value="mRNA"/>
</dbReference>
<dbReference type="PIR" id="S63686">
    <property type="entry name" value="S63686"/>
</dbReference>
<dbReference type="RefSeq" id="NP_173458.1">
    <property type="nucleotide sequence ID" value="NM_101884.4"/>
</dbReference>
<dbReference type="SMR" id="Q39227"/>
<dbReference type="BioGRID" id="23860">
    <property type="interactions" value="2"/>
</dbReference>
<dbReference type="FunCoup" id="Q39227">
    <property type="interactions" value="271"/>
</dbReference>
<dbReference type="IntAct" id="Q39227">
    <property type="interactions" value="2"/>
</dbReference>
<dbReference type="STRING" id="3702.Q39227"/>
<dbReference type="iPTMnet" id="Q39227"/>
<dbReference type="SwissPalm" id="Q39227"/>
<dbReference type="PaxDb" id="3702-AT1G20330.1"/>
<dbReference type="ProteomicsDB" id="234532"/>
<dbReference type="EnsemblPlants" id="AT1G20330.1">
    <property type="protein sequence ID" value="AT1G20330.1"/>
    <property type="gene ID" value="AT1G20330"/>
</dbReference>
<dbReference type="GeneID" id="838621"/>
<dbReference type="Gramene" id="AT1G20330.1">
    <property type="protein sequence ID" value="AT1G20330.1"/>
    <property type="gene ID" value="AT1G20330"/>
</dbReference>
<dbReference type="KEGG" id="ath:AT1G20330"/>
<dbReference type="Araport" id="AT1G20330"/>
<dbReference type="TAIR" id="AT1G20330">
    <property type="gene designation" value="SMT2"/>
</dbReference>
<dbReference type="eggNOG" id="KOG1269">
    <property type="taxonomic scope" value="Eukaryota"/>
</dbReference>
<dbReference type="HOGENOM" id="CLU_039068_5_2_1"/>
<dbReference type="InParanoid" id="Q39227"/>
<dbReference type="OMA" id="EYFQHWD"/>
<dbReference type="OrthoDB" id="4310724at2759"/>
<dbReference type="PhylomeDB" id="Q39227"/>
<dbReference type="BioCyc" id="ARA:AT1G20330-MONOMER"/>
<dbReference type="BioCyc" id="MetaCyc:AT1G20330-MONOMER"/>
<dbReference type="UniPathway" id="UPA00766"/>
<dbReference type="CD-CODE" id="4299E36E">
    <property type="entry name" value="Nucleolus"/>
</dbReference>
<dbReference type="PRO" id="PR:Q39227"/>
<dbReference type="Proteomes" id="UP000006548">
    <property type="component" value="Chromosome 1"/>
</dbReference>
<dbReference type="ExpressionAtlas" id="Q39227">
    <property type="expression patterns" value="baseline and differential"/>
</dbReference>
<dbReference type="GO" id="GO:0005783">
    <property type="term" value="C:endoplasmic reticulum"/>
    <property type="evidence" value="ECO:0007005"/>
    <property type="project" value="TAIR"/>
</dbReference>
<dbReference type="GO" id="GO:0005794">
    <property type="term" value="C:Golgi apparatus"/>
    <property type="evidence" value="ECO:0007005"/>
    <property type="project" value="TAIR"/>
</dbReference>
<dbReference type="GO" id="GO:0005634">
    <property type="term" value="C:nucleus"/>
    <property type="evidence" value="ECO:0007005"/>
    <property type="project" value="TAIR"/>
</dbReference>
<dbReference type="GO" id="GO:0030797">
    <property type="term" value="F:24-methylenesterol C-methyltransferase activity"/>
    <property type="evidence" value="ECO:0007669"/>
    <property type="project" value="UniProtKB-EC"/>
</dbReference>
<dbReference type="GO" id="GO:0008757">
    <property type="term" value="F:S-adenosylmethionine-dependent methyltransferase activity"/>
    <property type="evidence" value="ECO:0000314"/>
    <property type="project" value="TAIR"/>
</dbReference>
<dbReference type="GO" id="GO:0032259">
    <property type="term" value="P:methylation"/>
    <property type="evidence" value="ECO:0007669"/>
    <property type="project" value="UniProtKB-KW"/>
</dbReference>
<dbReference type="GO" id="GO:0009825">
    <property type="term" value="P:multidimensional cell growth"/>
    <property type="evidence" value="ECO:0000315"/>
    <property type="project" value="TAIR"/>
</dbReference>
<dbReference type="GO" id="GO:0032876">
    <property type="term" value="P:negative regulation of DNA endoreduplication"/>
    <property type="evidence" value="ECO:0000315"/>
    <property type="project" value="TAIR"/>
</dbReference>
<dbReference type="GO" id="GO:0007389">
    <property type="term" value="P:pattern specification process"/>
    <property type="evidence" value="ECO:0000315"/>
    <property type="project" value="TAIR"/>
</dbReference>
<dbReference type="GO" id="GO:0016126">
    <property type="term" value="P:sterol biosynthetic process"/>
    <property type="evidence" value="ECO:0000314"/>
    <property type="project" value="TAIR"/>
</dbReference>
<dbReference type="GO" id="GO:0010051">
    <property type="term" value="P:xylem and phloem pattern formation"/>
    <property type="evidence" value="ECO:0000315"/>
    <property type="project" value="TAIR"/>
</dbReference>
<dbReference type="CDD" id="cd02440">
    <property type="entry name" value="AdoMet_MTases"/>
    <property type="match status" value="1"/>
</dbReference>
<dbReference type="FunFam" id="3.40.50.150:FF:000168">
    <property type="entry name" value="Methyltransferase"/>
    <property type="match status" value="1"/>
</dbReference>
<dbReference type="Gene3D" id="3.40.50.150">
    <property type="entry name" value="Vaccinia Virus protein VP39"/>
    <property type="match status" value="1"/>
</dbReference>
<dbReference type="InterPro" id="IPR013216">
    <property type="entry name" value="Methyltransf_11"/>
</dbReference>
<dbReference type="InterPro" id="IPR030384">
    <property type="entry name" value="MeTrfase_SMT"/>
</dbReference>
<dbReference type="InterPro" id="IPR029063">
    <property type="entry name" value="SAM-dependent_MTases_sf"/>
</dbReference>
<dbReference type="InterPro" id="IPR013705">
    <property type="entry name" value="Sterol_MeTrfase_C"/>
</dbReference>
<dbReference type="PANTHER" id="PTHR44742">
    <property type="match status" value="1"/>
</dbReference>
<dbReference type="PANTHER" id="PTHR44742:SF2">
    <property type="entry name" value="24-METHYLENESTEROL C-METHYLTRANSFERASE 2"/>
    <property type="match status" value="1"/>
</dbReference>
<dbReference type="Pfam" id="PF08241">
    <property type="entry name" value="Methyltransf_11"/>
    <property type="match status" value="1"/>
</dbReference>
<dbReference type="Pfam" id="PF08498">
    <property type="entry name" value="Sterol_MT_C"/>
    <property type="match status" value="1"/>
</dbReference>
<dbReference type="SUPFAM" id="SSF53335">
    <property type="entry name" value="S-adenosyl-L-methionine-dependent methyltransferases"/>
    <property type="match status" value="1"/>
</dbReference>
<dbReference type="PROSITE" id="PS51685">
    <property type="entry name" value="SAM_MT_ERG6_SMT"/>
    <property type="match status" value="1"/>
</dbReference>
<gene>
    <name type="primary">SMT2</name>
    <name type="synonym">CVP1</name>
    <name type="ordered locus">At1g20330</name>
    <name type="ORF">F14O10.7</name>
</gene>
<accession>Q39227</accession>
<accession>Q8H155</accession>
<accession>Q8L7L3</accession>
<accession>Q8LCB0</accession>
<accession>Q9LN25</accession>
<feature type="chain" id="PRO_0000124801" description="24-methylenesterol C-methyltransferase 2">
    <location>
        <begin position="1"/>
        <end position="361"/>
    </location>
</feature>
<feature type="sequence conflict" description="In Ref. 1; CAA61966." evidence="2" ref="1">
    <original>Y</original>
    <variation>C</variation>
    <location>
        <position position="333"/>
    </location>
</feature>
<feature type="sequence conflict" description="In Ref. 4; AAM91592/AAN72104." evidence="2" ref="4">
    <original>E</original>
    <variation>Q</variation>
    <location>
        <position position="339"/>
    </location>
</feature>
<feature type="sequence conflict" description="In Ref. 4; AAN31890." evidence="2" ref="4">
    <original>P</original>
    <variation>A</variation>
    <location>
        <position position="354"/>
    </location>
</feature>